<comment type="similarity">
    <text evidence="1">Belongs to the ATP-dependent AMP-binding enzyme family.</text>
</comment>
<proteinExistence type="inferred from homology"/>
<organism>
    <name type="scientific">Staphylococcus haemolyticus (strain JCSC1435)</name>
    <dbReference type="NCBI Taxonomy" id="279808"/>
    <lineage>
        <taxon>Bacteria</taxon>
        <taxon>Bacillati</taxon>
        <taxon>Bacillota</taxon>
        <taxon>Bacilli</taxon>
        <taxon>Bacillales</taxon>
        <taxon>Staphylococcaceae</taxon>
        <taxon>Staphylococcus</taxon>
    </lineage>
</organism>
<protein>
    <recommendedName>
        <fullName>Putative long chain fatty acid-CoA ligase VraA</fullName>
        <ecNumber>6.2.1.-</ecNumber>
    </recommendedName>
    <alternativeName>
        <fullName>Acyl-CoA synthetase</fullName>
    </alternativeName>
</protein>
<accession>Q4L3Q0</accession>
<gene>
    <name type="primary">vraA</name>
    <name type="ordered locus">SH2418</name>
</gene>
<sequence>MLEIIKRLEYYAKVQPQSIALQIDDEIVNYENLYQKICDCTLNSPKFKLGCRVALLNDSPIVNITNYFVVLMMDGVPCFLDNKWSRDTIDKLIEHFHIEYVMTAIGKFKRTTSFGTYEKYISEQLKVDDLLHIGFTSGTTGLPKAYYRNEPSWIASYVENEKLIYNYEKALAAPGPLAHSLSLYTCIYALYSGRTFIGQRQFDAKRFISILNEQHSNIALFLVPTMLHQLLNVDTTITHIKSIFCSGAKLSESLFKTVSQQFKNANIIEFFGTSEASFITYNFNQTSPTNSVGQVFPNVSIKLEAQDNRKIGLLKVQSNMIYSGYVDVGVVQPHSWIETGDYAYIQNNQLYLVSRKSDRLIIGGKNIYPNVIEQQVKSLDGIEEAVVVGEPHRRFGEIAVLIYVGNQELDYTTLRRYLRQTLSRYEIPSKLVRVKDLPFTNSGKVARNTVQTLYLEGAFKV</sequence>
<reference key="1">
    <citation type="journal article" date="2005" name="J. Bacteriol.">
        <title>Whole-genome sequencing of Staphylococcus haemolyticus uncovers the extreme plasticity of its genome and the evolution of human-colonizing staphylococcal species.</title>
        <authorList>
            <person name="Takeuchi F."/>
            <person name="Watanabe S."/>
            <person name="Baba T."/>
            <person name="Yuzawa H."/>
            <person name="Ito T."/>
            <person name="Morimoto Y."/>
            <person name="Kuroda M."/>
            <person name="Cui L."/>
            <person name="Takahashi M."/>
            <person name="Ankai A."/>
            <person name="Baba S."/>
            <person name="Fukui S."/>
            <person name="Lee J.C."/>
            <person name="Hiramatsu K."/>
        </authorList>
    </citation>
    <scope>NUCLEOTIDE SEQUENCE [LARGE SCALE GENOMIC DNA]</scope>
    <source>
        <strain>JCSC1435</strain>
    </source>
</reference>
<feature type="chain" id="PRO_0000193199" description="Putative long chain fatty acid-CoA ligase VraA">
    <location>
        <begin position="1"/>
        <end position="461"/>
    </location>
</feature>
<evidence type="ECO:0000305" key="1"/>
<name>VRAA_STAHJ</name>
<keyword id="KW-0276">Fatty acid metabolism</keyword>
<keyword id="KW-0436">Ligase</keyword>
<keyword id="KW-0443">Lipid metabolism</keyword>
<dbReference type="EC" id="6.2.1.-"/>
<dbReference type="EMBL" id="AP006716">
    <property type="protein sequence ID" value="BAE05727.1"/>
    <property type="molecule type" value="Genomic_DNA"/>
</dbReference>
<dbReference type="RefSeq" id="WP_011276673.1">
    <property type="nucleotide sequence ID" value="NC_007168.1"/>
</dbReference>
<dbReference type="SMR" id="Q4L3Q0"/>
<dbReference type="KEGG" id="sha:SH2418"/>
<dbReference type="eggNOG" id="COG0318">
    <property type="taxonomic scope" value="Bacteria"/>
</dbReference>
<dbReference type="HOGENOM" id="CLU_000022_59_0_9"/>
<dbReference type="OrthoDB" id="9757771at2"/>
<dbReference type="Proteomes" id="UP000000543">
    <property type="component" value="Chromosome"/>
</dbReference>
<dbReference type="GO" id="GO:0031956">
    <property type="term" value="F:medium-chain fatty acid-CoA ligase activity"/>
    <property type="evidence" value="ECO:0007669"/>
    <property type="project" value="TreeGrafter"/>
</dbReference>
<dbReference type="GO" id="GO:0006631">
    <property type="term" value="P:fatty acid metabolic process"/>
    <property type="evidence" value="ECO:0007669"/>
    <property type="project" value="UniProtKB-KW"/>
</dbReference>
<dbReference type="CDD" id="cd17633">
    <property type="entry name" value="AFD_YhfT-like"/>
    <property type="match status" value="1"/>
</dbReference>
<dbReference type="Gene3D" id="3.30.300.30">
    <property type="match status" value="1"/>
</dbReference>
<dbReference type="Gene3D" id="3.40.50.12780">
    <property type="entry name" value="N-terminal domain of ligase-like"/>
    <property type="match status" value="1"/>
</dbReference>
<dbReference type="InterPro" id="IPR025110">
    <property type="entry name" value="AMP-bd_C"/>
</dbReference>
<dbReference type="InterPro" id="IPR045851">
    <property type="entry name" value="AMP-bd_C_sf"/>
</dbReference>
<dbReference type="InterPro" id="IPR020845">
    <property type="entry name" value="AMP-binding_CS"/>
</dbReference>
<dbReference type="InterPro" id="IPR000873">
    <property type="entry name" value="AMP-dep_synth/lig_dom"/>
</dbReference>
<dbReference type="InterPro" id="IPR042099">
    <property type="entry name" value="ANL_N_sf"/>
</dbReference>
<dbReference type="PANTHER" id="PTHR43201">
    <property type="entry name" value="ACYL-COA SYNTHETASE"/>
    <property type="match status" value="1"/>
</dbReference>
<dbReference type="PANTHER" id="PTHR43201:SF5">
    <property type="entry name" value="MEDIUM-CHAIN ACYL-COA LIGASE ACSF2, MITOCHONDRIAL"/>
    <property type="match status" value="1"/>
</dbReference>
<dbReference type="Pfam" id="PF00501">
    <property type="entry name" value="AMP-binding"/>
    <property type="match status" value="1"/>
</dbReference>
<dbReference type="Pfam" id="PF13193">
    <property type="entry name" value="AMP-binding_C"/>
    <property type="match status" value="1"/>
</dbReference>
<dbReference type="SUPFAM" id="SSF56801">
    <property type="entry name" value="Acetyl-CoA synthetase-like"/>
    <property type="match status" value="1"/>
</dbReference>
<dbReference type="PROSITE" id="PS00455">
    <property type="entry name" value="AMP_BINDING"/>
    <property type="match status" value="1"/>
</dbReference>